<organism>
    <name type="scientific">Renilla reniformis</name>
    <name type="common">Sea pansy</name>
    <dbReference type="NCBI Taxonomy" id="6136"/>
    <lineage>
        <taxon>Eukaryota</taxon>
        <taxon>Metazoa</taxon>
        <taxon>Cnidaria</taxon>
        <taxon>Anthozoa</taxon>
        <taxon>Octocorallia</taxon>
        <taxon>Scleralcyonacea</taxon>
        <taxon>Pennatuloidea</taxon>
        <taxon>Renillidae</taxon>
        <taxon>Renilla</taxon>
    </lineage>
</organism>
<name>LBP_RENRE</name>
<proteinExistence type="evidence at protein level"/>
<evidence type="ECO:0000255" key="1">
    <source>
        <dbReference type="PROSITE-ProRule" id="PRU00448"/>
    </source>
</evidence>
<evidence type="ECO:0000305" key="2"/>
<dbReference type="PIR" id="S11057">
    <property type="entry name" value="S11057"/>
</dbReference>
<dbReference type="SMR" id="P05938"/>
<dbReference type="GO" id="GO:0005509">
    <property type="term" value="F:calcium ion binding"/>
    <property type="evidence" value="ECO:0007669"/>
    <property type="project" value="InterPro"/>
</dbReference>
<dbReference type="GO" id="GO:0008218">
    <property type="term" value="P:bioluminescence"/>
    <property type="evidence" value="ECO:0007669"/>
    <property type="project" value="UniProtKB-KW"/>
</dbReference>
<dbReference type="CDD" id="cd00051">
    <property type="entry name" value="EFh"/>
    <property type="match status" value="1"/>
</dbReference>
<dbReference type="Gene3D" id="1.10.238.10">
    <property type="entry name" value="EF-hand"/>
    <property type="match status" value="1"/>
</dbReference>
<dbReference type="InterPro" id="IPR011992">
    <property type="entry name" value="EF-hand-dom_pair"/>
</dbReference>
<dbReference type="InterPro" id="IPR018247">
    <property type="entry name" value="EF_Hand_1_Ca_BS"/>
</dbReference>
<dbReference type="InterPro" id="IPR002048">
    <property type="entry name" value="EF_hand_dom"/>
</dbReference>
<dbReference type="Pfam" id="PF13202">
    <property type="entry name" value="EF-hand_5"/>
    <property type="match status" value="1"/>
</dbReference>
<dbReference type="Pfam" id="PF13499">
    <property type="entry name" value="EF-hand_7"/>
    <property type="match status" value="1"/>
</dbReference>
<dbReference type="SMART" id="SM00054">
    <property type="entry name" value="EFh"/>
    <property type="match status" value="3"/>
</dbReference>
<dbReference type="SUPFAM" id="SSF47473">
    <property type="entry name" value="EF-hand"/>
    <property type="match status" value="1"/>
</dbReference>
<dbReference type="PROSITE" id="PS00018">
    <property type="entry name" value="EF_HAND_1"/>
    <property type="match status" value="2"/>
</dbReference>
<dbReference type="PROSITE" id="PS50222">
    <property type="entry name" value="EF_HAND_2"/>
    <property type="match status" value="3"/>
</dbReference>
<comment type="function">
    <text>This Ca(2+)-dependent protein binds to luciferin. The luciferin of LBP is capable of reacting with luciferase and O(2) only when calcium is bound.</text>
</comment>
<reference key="1">
    <citation type="journal article" date="1990" name="FEBS Lett.">
        <title>Amino acid sequence of the Ca2(+)-triggered luciferin binding protein of Renilla reniformis.</title>
        <authorList>
            <person name="Kumar S."/>
            <person name="Harrylock M."/>
            <person name="Walsh K.A."/>
            <person name="Cormier M.J."/>
            <person name="Charbonneau H."/>
        </authorList>
    </citation>
    <scope>PROTEIN SEQUENCE</scope>
</reference>
<feature type="chain" id="PRO_0000073469" description="Luciferin-binding protein">
    <location>
        <begin position="1"/>
        <end position="184"/>
    </location>
</feature>
<feature type="domain" description="EF-hand 1" evidence="1">
    <location>
        <begin position="10"/>
        <end position="45"/>
    </location>
</feature>
<feature type="domain" description="EF-hand 2" evidence="2">
    <location>
        <begin position="46"/>
        <end position="81"/>
    </location>
</feature>
<feature type="domain" description="EF-hand 3" evidence="1">
    <location>
        <begin position="98"/>
        <end position="133"/>
    </location>
</feature>
<feature type="domain" description="EF-hand 4" evidence="1">
    <location>
        <begin position="134"/>
        <end position="169"/>
    </location>
</feature>
<feature type="binding site" evidence="1">
    <location>
        <position position="111"/>
    </location>
    <ligand>
        <name>Ca(2+)</name>
        <dbReference type="ChEBI" id="CHEBI:29108"/>
        <label>1</label>
    </ligand>
</feature>
<feature type="binding site" evidence="1">
    <location>
        <position position="113"/>
    </location>
    <ligand>
        <name>Ca(2+)</name>
        <dbReference type="ChEBI" id="CHEBI:29108"/>
        <label>1</label>
    </ligand>
</feature>
<feature type="binding site" evidence="1">
    <location>
        <position position="115"/>
    </location>
    <ligand>
        <name>Ca(2+)</name>
        <dbReference type="ChEBI" id="CHEBI:29108"/>
        <label>1</label>
    </ligand>
</feature>
<feature type="binding site" evidence="1">
    <location>
        <position position="117"/>
    </location>
    <ligand>
        <name>Ca(2+)</name>
        <dbReference type="ChEBI" id="CHEBI:29108"/>
        <label>1</label>
    </ligand>
</feature>
<feature type="binding site" evidence="1">
    <location>
        <position position="122"/>
    </location>
    <ligand>
        <name>Ca(2+)</name>
        <dbReference type="ChEBI" id="CHEBI:29108"/>
        <label>1</label>
    </ligand>
</feature>
<feature type="binding site" evidence="1">
    <location>
        <position position="147"/>
    </location>
    <ligand>
        <name>Ca(2+)</name>
        <dbReference type="ChEBI" id="CHEBI:29108"/>
        <label>2</label>
    </ligand>
</feature>
<feature type="binding site" evidence="1">
    <location>
        <position position="149"/>
    </location>
    <ligand>
        <name>Ca(2+)</name>
        <dbReference type="ChEBI" id="CHEBI:29108"/>
        <label>2</label>
    </ligand>
</feature>
<feature type="binding site" evidence="1">
    <location>
        <position position="151"/>
    </location>
    <ligand>
        <name>Ca(2+)</name>
        <dbReference type="ChEBI" id="CHEBI:29108"/>
        <label>2</label>
    </ligand>
</feature>
<feature type="binding site" evidence="1">
    <location>
        <position position="153"/>
    </location>
    <ligand>
        <name>Ca(2+)</name>
        <dbReference type="ChEBI" id="CHEBI:29108"/>
        <label>2</label>
    </ligand>
</feature>
<feature type="binding site" evidence="1">
    <location>
        <position position="158"/>
    </location>
    <ligand>
        <name>Ca(2+)</name>
        <dbReference type="ChEBI" id="CHEBI:29108"/>
        <label>2</label>
    </ligand>
</feature>
<sequence length="184" mass="20539">PEVTASERAYHLRKMKTRMKRVDVTGDGFISREDYELIAVRIAKIAKLSAEKAEETRQEFLRVADQLGLAPGVRISVEEAAVNATDSLLKMKAEEKAMAVIQSLIMYDCIDTDKDGYVSLPEFKAFLQAVGPDITDDKAITCFNTLDFNKNGQISRDEFLVTVNDFLFGLEETALANAFYGDLL</sequence>
<accession>P05938</accession>
<keyword id="KW-0106">Calcium</keyword>
<keyword id="KW-0903">Direct protein sequencing</keyword>
<keyword id="KW-0455">Luminescence</keyword>
<keyword id="KW-0479">Metal-binding</keyword>
<keyword id="KW-0599">Photoprotein</keyword>
<keyword id="KW-0677">Repeat</keyword>
<protein>
    <recommendedName>
        <fullName>Luciferin-binding protein</fullName>
        <shortName>LBP</shortName>
    </recommendedName>
</protein>